<sequence>MSASVRGNSKNPQSTSAITTLTDKLLEDISGDFETLQKQFSEKLETMSTRLDQLEESMREAMNKKSSVSPVTSTE</sequence>
<name>YB7F_SCHPO</name>
<organism>
    <name type="scientific">Schizosaccharomyces pombe (strain 972 / ATCC 24843)</name>
    <name type="common">Fission yeast</name>
    <dbReference type="NCBI Taxonomy" id="284812"/>
    <lineage>
        <taxon>Eukaryota</taxon>
        <taxon>Fungi</taxon>
        <taxon>Dikarya</taxon>
        <taxon>Ascomycota</taxon>
        <taxon>Taphrinomycotina</taxon>
        <taxon>Schizosaccharomycetes</taxon>
        <taxon>Schizosaccharomycetales</taxon>
        <taxon>Schizosaccharomycetaceae</taxon>
        <taxon>Schizosaccharomyces</taxon>
    </lineage>
</organism>
<keyword id="KW-1185">Reference proteome</keyword>
<reference key="1">
    <citation type="journal article" date="2002" name="Nature">
        <title>The genome sequence of Schizosaccharomyces pombe.</title>
        <authorList>
            <person name="Wood V."/>
            <person name="Gwilliam R."/>
            <person name="Rajandream M.A."/>
            <person name="Lyne M.H."/>
            <person name="Lyne R."/>
            <person name="Stewart A."/>
            <person name="Sgouros J.G."/>
            <person name="Peat N."/>
            <person name="Hayles J."/>
            <person name="Baker S.G."/>
            <person name="Basham D."/>
            <person name="Bowman S."/>
            <person name="Brooks K."/>
            <person name="Brown D."/>
            <person name="Brown S."/>
            <person name="Chillingworth T."/>
            <person name="Churcher C.M."/>
            <person name="Collins M."/>
            <person name="Connor R."/>
            <person name="Cronin A."/>
            <person name="Davis P."/>
            <person name="Feltwell T."/>
            <person name="Fraser A."/>
            <person name="Gentles S."/>
            <person name="Goble A."/>
            <person name="Hamlin N."/>
            <person name="Harris D.E."/>
            <person name="Hidalgo J."/>
            <person name="Hodgson G."/>
            <person name="Holroyd S."/>
            <person name="Hornsby T."/>
            <person name="Howarth S."/>
            <person name="Huckle E.J."/>
            <person name="Hunt S."/>
            <person name="Jagels K."/>
            <person name="James K.D."/>
            <person name="Jones L."/>
            <person name="Jones M."/>
            <person name="Leather S."/>
            <person name="McDonald S."/>
            <person name="McLean J."/>
            <person name="Mooney P."/>
            <person name="Moule S."/>
            <person name="Mungall K.L."/>
            <person name="Murphy L.D."/>
            <person name="Niblett D."/>
            <person name="Odell C."/>
            <person name="Oliver K."/>
            <person name="O'Neil S."/>
            <person name="Pearson D."/>
            <person name="Quail M.A."/>
            <person name="Rabbinowitsch E."/>
            <person name="Rutherford K.M."/>
            <person name="Rutter S."/>
            <person name="Saunders D."/>
            <person name="Seeger K."/>
            <person name="Sharp S."/>
            <person name="Skelton J."/>
            <person name="Simmonds M.N."/>
            <person name="Squares R."/>
            <person name="Squares S."/>
            <person name="Stevens K."/>
            <person name="Taylor K."/>
            <person name="Taylor R.G."/>
            <person name="Tivey A."/>
            <person name="Walsh S.V."/>
            <person name="Warren T."/>
            <person name="Whitehead S."/>
            <person name="Woodward J.R."/>
            <person name="Volckaert G."/>
            <person name="Aert R."/>
            <person name="Robben J."/>
            <person name="Grymonprez B."/>
            <person name="Weltjens I."/>
            <person name="Vanstreels E."/>
            <person name="Rieger M."/>
            <person name="Schaefer M."/>
            <person name="Mueller-Auer S."/>
            <person name="Gabel C."/>
            <person name="Fuchs M."/>
            <person name="Duesterhoeft A."/>
            <person name="Fritzc C."/>
            <person name="Holzer E."/>
            <person name="Moestl D."/>
            <person name="Hilbert H."/>
            <person name="Borzym K."/>
            <person name="Langer I."/>
            <person name="Beck A."/>
            <person name="Lehrach H."/>
            <person name="Reinhardt R."/>
            <person name="Pohl T.M."/>
            <person name="Eger P."/>
            <person name="Zimmermann W."/>
            <person name="Wedler H."/>
            <person name="Wambutt R."/>
            <person name="Purnelle B."/>
            <person name="Goffeau A."/>
            <person name="Cadieu E."/>
            <person name="Dreano S."/>
            <person name="Gloux S."/>
            <person name="Lelaure V."/>
            <person name="Mottier S."/>
            <person name="Galibert F."/>
            <person name="Aves S.J."/>
            <person name="Xiang Z."/>
            <person name="Hunt C."/>
            <person name="Moore K."/>
            <person name="Hurst S.M."/>
            <person name="Lucas M."/>
            <person name="Rochet M."/>
            <person name="Gaillardin C."/>
            <person name="Tallada V.A."/>
            <person name="Garzon A."/>
            <person name="Thode G."/>
            <person name="Daga R.R."/>
            <person name="Cruzado L."/>
            <person name="Jimenez J."/>
            <person name="Sanchez M."/>
            <person name="del Rey F."/>
            <person name="Benito J."/>
            <person name="Dominguez A."/>
            <person name="Revuelta J.L."/>
            <person name="Moreno S."/>
            <person name="Armstrong J."/>
            <person name="Forsburg S.L."/>
            <person name="Cerutti L."/>
            <person name="Lowe T."/>
            <person name="McCombie W.R."/>
            <person name="Paulsen I."/>
            <person name="Potashkin J."/>
            <person name="Shpakovski G.V."/>
            <person name="Ussery D."/>
            <person name="Barrell B.G."/>
            <person name="Nurse P."/>
        </authorList>
    </citation>
    <scope>NUCLEOTIDE SEQUENCE [LARGE SCALE GENOMIC DNA]</scope>
    <source>
        <strain>972 / ATCC 24843</strain>
    </source>
</reference>
<evidence type="ECO:0000305" key="1"/>
<proteinExistence type="inferred from homology"/>
<feature type="chain" id="PRO_0000124809" description="Uncharacterized protein C16E9.15">
    <location>
        <begin position="1"/>
        <end position="75"/>
    </location>
</feature>
<protein>
    <recommendedName>
        <fullName>Uncharacterized protein C16E9.15</fullName>
    </recommendedName>
</protein>
<comment type="similarity">
    <text evidence="1">Belongs to the HSBP1 family.</text>
</comment>
<gene>
    <name type="ORF">SPBC16E9.15</name>
</gene>
<dbReference type="EMBL" id="CU329671">
    <property type="protein sequence ID" value="CAB16907.1"/>
    <property type="molecule type" value="Genomic_DNA"/>
</dbReference>
<dbReference type="PIR" id="T39589">
    <property type="entry name" value="T39589"/>
</dbReference>
<dbReference type="RefSeq" id="NP_595797.1">
    <property type="nucleotide sequence ID" value="NM_001021698.2"/>
</dbReference>
<dbReference type="SMR" id="O14330"/>
<dbReference type="BioGRID" id="276661">
    <property type="interactions" value="2"/>
</dbReference>
<dbReference type="FunCoup" id="O14330">
    <property type="interactions" value="189"/>
</dbReference>
<dbReference type="STRING" id="284812.O14330"/>
<dbReference type="iPTMnet" id="O14330"/>
<dbReference type="PaxDb" id="4896-SPBC16E9.15.1"/>
<dbReference type="EnsemblFungi" id="SPBC16E9.15.1">
    <property type="protein sequence ID" value="SPBC16E9.15.1:pep"/>
    <property type="gene ID" value="SPBC16E9.15"/>
</dbReference>
<dbReference type="KEGG" id="spo:2540124"/>
<dbReference type="PomBase" id="SPBC16E9.15"/>
<dbReference type="VEuPathDB" id="FungiDB:SPBC16E9.15"/>
<dbReference type="eggNOG" id="KOG4119">
    <property type="taxonomic scope" value="Eukaryota"/>
</dbReference>
<dbReference type="HOGENOM" id="CLU_2672519_0_0_1"/>
<dbReference type="InParanoid" id="O14330"/>
<dbReference type="Reactome" id="R-SPO-3371568">
    <property type="pathway name" value="Attenuation phase"/>
</dbReference>
<dbReference type="Reactome" id="R-SPO-3371571">
    <property type="pathway name" value="HSF1-dependent transactivation"/>
</dbReference>
<dbReference type="PRO" id="PR:O14330"/>
<dbReference type="Proteomes" id="UP000002485">
    <property type="component" value="Chromosome II"/>
</dbReference>
<dbReference type="GO" id="GO:0005829">
    <property type="term" value="C:cytosol"/>
    <property type="evidence" value="ECO:0007005"/>
    <property type="project" value="PomBase"/>
</dbReference>
<dbReference type="GO" id="GO:0005634">
    <property type="term" value="C:nucleus"/>
    <property type="evidence" value="ECO:0007005"/>
    <property type="project" value="PomBase"/>
</dbReference>
<dbReference type="GO" id="GO:0003714">
    <property type="term" value="F:transcription corepressor activity"/>
    <property type="evidence" value="ECO:0007669"/>
    <property type="project" value="InterPro"/>
</dbReference>
<dbReference type="GO" id="GO:0070370">
    <property type="term" value="P:cellular heat acclimation"/>
    <property type="evidence" value="ECO:0000318"/>
    <property type="project" value="GO_Central"/>
</dbReference>
<dbReference type="Gene3D" id="1.20.5.430">
    <property type="match status" value="1"/>
</dbReference>
<dbReference type="InterPro" id="IPR009643">
    <property type="entry name" value="HS1-bd"/>
</dbReference>
<dbReference type="Pfam" id="PF06825">
    <property type="entry name" value="HSBP1"/>
    <property type="match status" value="1"/>
</dbReference>
<accession>O14330</accession>